<organism>
    <name type="scientific">Brassica napus</name>
    <name type="common">Rape</name>
    <dbReference type="NCBI Taxonomy" id="3708"/>
    <lineage>
        <taxon>Eukaryota</taxon>
        <taxon>Viridiplantae</taxon>
        <taxon>Streptophyta</taxon>
        <taxon>Embryophyta</taxon>
        <taxon>Tracheophyta</taxon>
        <taxon>Spermatophyta</taxon>
        <taxon>Magnoliopsida</taxon>
        <taxon>eudicotyledons</taxon>
        <taxon>Gunneridae</taxon>
        <taxon>Pentapetalae</taxon>
        <taxon>rosids</taxon>
        <taxon>malvids</taxon>
        <taxon>Brassicales</taxon>
        <taxon>Brassicaceae</taxon>
        <taxon>Brassiceae</taxon>
        <taxon>Brassica</taxon>
    </lineage>
</organism>
<dbReference type="EMBL" id="U22175">
    <property type="protein sequence ID" value="AAA64311.1"/>
    <property type="molecule type" value="mRNA"/>
</dbReference>
<dbReference type="PIR" id="T07866">
    <property type="entry name" value="T07866"/>
</dbReference>
<dbReference type="SMR" id="Q42616"/>
<dbReference type="GO" id="GO:0008289">
    <property type="term" value="F:lipid binding"/>
    <property type="evidence" value="ECO:0007669"/>
    <property type="project" value="UniProtKB-KW"/>
</dbReference>
<dbReference type="GO" id="GO:0006869">
    <property type="term" value="P:lipid transport"/>
    <property type="evidence" value="ECO:0007669"/>
    <property type="project" value="InterPro"/>
</dbReference>
<dbReference type="CDD" id="cd01960">
    <property type="entry name" value="nsLTP1"/>
    <property type="match status" value="1"/>
</dbReference>
<dbReference type="FunFam" id="1.10.110.10:FF:000002">
    <property type="entry name" value="Non-specific lipid-transfer protein"/>
    <property type="match status" value="1"/>
</dbReference>
<dbReference type="Gene3D" id="1.10.110.10">
    <property type="entry name" value="Plant lipid-transfer and hydrophobic proteins"/>
    <property type="match status" value="1"/>
</dbReference>
<dbReference type="InterPro" id="IPR036312">
    <property type="entry name" value="Bifun_inhib/LTP/seed_sf"/>
</dbReference>
<dbReference type="InterPro" id="IPR016140">
    <property type="entry name" value="Bifunc_inhib/LTP/seed_store"/>
</dbReference>
<dbReference type="InterPro" id="IPR000528">
    <property type="entry name" value="Plant_nsLTP"/>
</dbReference>
<dbReference type="PANTHER" id="PTHR33076">
    <property type="entry name" value="NON-SPECIFIC LIPID-TRANSFER PROTEIN 2-RELATED"/>
    <property type="match status" value="1"/>
</dbReference>
<dbReference type="Pfam" id="PF00234">
    <property type="entry name" value="Tryp_alpha_amyl"/>
    <property type="match status" value="1"/>
</dbReference>
<dbReference type="PRINTS" id="PR00382">
    <property type="entry name" value="LIPIDTRNSFER"/>
</dbReference>
<dbReference type="SMART" id="SM00499">
    <property type="entry name" value="AAI"/>
    <property type="match status" value="1"/>
</dbReference>
<dbReference type="SUPFAM" id="SSF47699">
    <property type="entry name" value="Bifunctional inhibitor/lipid-transfer protein/seed storage 2S albumin"/>
    <property type="match status" value="1"/>
</dbReference>
<dbReference type="PROSITE" id="PS00597">
    <property type="entry name" value="PLANT_LTP"/>
    <property type="match status" value="1"/>
</dbReference>
<evidence type="ECO:0000255" key="1"/>
<evidence type="ECO:0000305" key="2"/>
<proteinExistence type="inferred from homology"/>
<sequence length="117" mass="11741">MAGLVKLSCLVLACMIVAGPIATNAALSCGTVSGNLAACIGYLTQNGPVPTACCSGVTSLNNMARTTPDRQQACRCLVGAANALPTINVARAAGLPKACGVNIPYKISKTTNCNSVK</sequence>
<reference key="1">
    <citation type="journal article" date="1996" name="Planta">
        <title>Germination-specific lipid transfer protein cDNAs in Brassica napus L.</title>
        <authorList>
            <person name="Soufleri I.A."/>
            <person name="Vergnolle C."/>
            <person name="Miginiac E."/>
            <person name="Kader J.-C."/>
        </authorList>
    </citation>
    <scope>NUCLEOTIDE SEQUENCE [MRNA]</scope>
    <source>
        <strain>cv. Darmor</strain>
    </source>
</reference>
<keyword id="KW-1015">Disulfide bond</keyword>
<keyword id="KW-0446">Lipid-binding</keyword>
<keyword id="KW-0732">Signal</keyword>
<keyword id="KW-0813">Transport</keyword>
<protein>
    <recommendedName>
        <fullName>Non-specific lipid-transfer protein 3</fullName>
        <shortName>LTP 3</shortName>
    </recommendedName>
</protein>
<comment type="function">
    <text>Plant non-specific lipid-transfer proteins transfer phospholipids as well as galactolipids across membranes. May play a role in wax or cutin deposition in the cell walls of expanding epidermal cells and certain secretory tissues.</text>
</comment>
<comment type="similarity">
    <text evidence="2">Belongs to the plant LTP family.</text>
</comment>
<name>NLTP3_BRANA</name>
<feature type="signal peptide" evidence="1">
    <location>
        <begin position="1"/>
        <end position="25"/>
    </location>
</feature>
<feature type="chain" id="PRO_0000018370" description="Non-specific lipid-transfer protein 3">
    <location>
        <begin position="26"/>
        <end position="117"/>
    </location>
</feature>
<feature type="disulfide bond" evidence="1">
    <location>
        <begin position="29"/>
        <end position="76"/>
    </location>
</feature>
<feature type="disulfide bond" evidence="1">
    <location>
        <begin position="39"/>
        <end position="53"/>
    </location>
</feature>
<feature type="disulfide bond" evidence="1">
    <location>
        <begin position="54"/>
        <end position="99"/>
    </location>
</feature>
<feature type="disulfide bond" evidence="1">
    <location>
        <begin position="74"/>
        <end position="113"/>
    </location>
</feature>
<gene>
    <name type="primary">LTP3</name>
</gene>
<accession>Q42616</accession>